<reference key="1">
    <citation type="submission" date="2003-06" db="EMBL/GenBank/DDBJ databases">
        <title>The complete genome sequence of Haemophilus ducreyi.</title>
        <authorList>
            <person name="Munson R.S. Jr."/>
            <person name="Ray W.C."/>
            <person name="Mahairas G."/>
            <person name="Sabo P."/>
            <person name="Mungur R."/>
            <person name="Johnson L."/>
            <person name="Nguyen D."/>
            <person name="Wang J."/>
            <person name="Forst C."/>
            <person name="Hood L."/>
        </authorList>
    </citation>
    <scope>NUCLEOTIDE SEQUENCE [LARGE SCALE GENOMIC DNA]</scope>
    <source>
        <strain>35000HP / ATCC 700724</strain>
    </source>
</reference>
<dbReference type="EC" id="2.1.3.15" evidence="1"/>
<dbReference type="EMBL" id="AE017143">
    <property type="protein sequence ID" value="AAP96269.1"/>
    <property type="molecule type" value="Genomic_DNA"/>
</dbReference>
<dbReference type="RefSeq" id="WP_010945314.1">
    <property type="nucleotide sequence ID" value="NC_002940.2"/>
</dbReference>
<dbReference type="SMR" id="Q7VLH8"/>
<dbReference type="STRING" id="233412.HD_1466"/>
<dbReference type="KEGG" id="hdu:HD_1466"/>
<dbReference type="eggNOG" id="COG0777">
    <property type="taxonomic scope" value="Bacteria"/>
</dbReference>
<dbReference type="HOGENOM" id="CLU_015486_1_0_6"/>
<dbReference type="OrthoDB" id="9772975at2"/>
<dbReference type="UniPathway" id="UPA00655">
    <property type="reaction ID" value="UER00711"/>
</dbReference>
<dbReference type="Proteomes" id="UP000001022">
    <property type="component" value="Chromosome"/>
</dbReference>
<dbReference type="GO" id="GO:0009329">
    <property type="term" value="C:acetate CoA-transferase complex"/>
    <property type="evidence" value="ECO:0007669"/>
    <property type="project" value="TreeGrafter"/>
</dbReference>
<dbReference type="GO" id="GO:0003989">
    <property type="term" value="F:acetyl-CoA carboxylase activity"/>
    <property type="evidence" value="ECO:0007669"/>
    <property type="project" value="InterPro"/>
</dbReference>
<dbReference type="GO" id="GO:0005524">
    <property type="term" value="F:ATP binding"/>
    <property type="evidence" value="ECO:0007669"/>
    <property type="project" value="UniProtKB-KW"/>
</dbReference>
<dbReference type="GO" id="GO:0016743">
    <property type="term" value="F:carboxyl- or carbamoyltransferase activity"/>
    <property type="evidence" value="ECO:0007669"/>
    <property type="project" value="UniProtKB-UniRule"/>
</dbReference>
<dbReference type="GO" id="GO:0008270">
    <property type="term" value="F:zinc ion binding"/>
    <property type="evidence" value="ECO:0007669"/>
    <property type="project" value="UniProtKB-UniRule"/>
</dbReference>
<dbReference type="GO" id="GO:0006633">
    <property type="term" value="P:fatty acid biosynthetic process"/>
    <property type="evidence" value="ECO:0007669"/>
    <property type="project" value="UniProtKB-KW"/>
</dbReference>
<dbReference type="GO" id="GO:2001295">
    <property type="term" value="P:malonyl-CoA biosynthetic process"/>
    <property type="evidence" value="ECO:0007669"/>
    <property type="project" value="UniProtKB-UniRule"/>
</dbReference>
<dbReference type="Gene3D" id="3.90.226.10">
    <property type="entry name" value="2-enoyl-CoA Hydratase, Chain A, domain 1"/>
    <property type="match status" value="1"/>
</dbReference>
<dbReference type="HAMAP" id="MF_01395">
    <property type="entry name" value="AcetylCoA_CT_beta"/>
    <property type="match status" value="1"/>
</dbReference>
<dbReference type="InterPro" id="IPR034733">
    <property type="entry name" value="AcCoA_carboxyl_beta"/>
</dbReference>
<dbReference type="InterPro" id="IPR000438">
    <property type="entry name" value="Acetyl_CoA_COase_Trfase_b_su"/>
</dbReference>
<dbReference type="InterPro" id="IPR029045">
    <property type="entry name" value="ClpP/crotonase-like_dom_sf"/>
</dbReference>
<dbReference type="InterPro" id="IPR011762">
    <property type="entry name" value="COA_CT_N"/>
</dbReference>
<dbReference type="InterPro" id="IPR041010">
    <property type="entry name" value="Znf-ACC"/>
</dbReference>
<dbReference type="NCBIfam" id="TIGR00515">
    <property type="entry name" value="accD"/>
    <property type="match status" value="1"/>
</dbReference>
<dbReference type="PANTHER" id="PTHR42995">
    <property type="entry name" value="ACETYL-COENZYME A CARBOXYLASE CARBOXYL TRANSFERASE SUBUNIT BETA, CHLOROPLASTIC"/>
    <property type="match status" value="1"/>
</dbReference>
<dbReference type="PANTHER" id="PTHR42995:SF5">
    <property type="entry name" value="ACETYL-COENZYME A CARBOXYLASE CARBOXYL TRANSFERASE SUBUNIT BETA, CHLOROPLASTIC"/>
    <property type="match status" value="1"/>
</dbReference>
<dbReference type="Pfam" id="PF01039">
    <property type="entry name" value="Carboxyl_trans"/>
    <property type="match status" value="1"/>
</dbReference>
<dbReference type="Pfam" id="PF17848">
    <property type="entry name" value="Zn_ribbon_ACC"/>
    <property type="match status" value="1"/>
</dbReference>
<dbReference type="PRINTS" id="PR01070">
    <property type="entry name" value="ACCCTRFRASEB"/>
</dbReference>
<dbReference type="SUPFAM" id="SSF52096">
    <property type="entry name" value="ClpP/crotonase"/>
    <property type="match status" value="1"/>
</dbReference>
<dbReference type="PROSITE" id="PS50980">
    <property type="entry name" value="COA_CT_NTER"/>
    <property type="match status" value="1"/>
</dbReference>
<evidence type="ECO:0000255" key="1">
    <source>
        <dbReference type="HAMAP-Rule" id="MF_01395"/>
    </source>
</evidence>
<evidence type="ECO:0000255" key="2">
    <source>
        <dbReference type="PROSITE-ProRule" id="PRU01136"/>
    </source>
</evidence>
<accession>Q7VLH8</accession>
<organism>
    <name type="scientific">Haemophilus ducreyi (strain 35000HP / ATCC 700724)</name>
    <dbReference type="NCBI Taxonomy" id="233412"/>
    <lineage>
        <taxon>Bacteria</taxon>
        <taxon>Pseudomonadati</taxon>
        <taxon>Pseudomonadota</taxon>
        <taxon>Gammaproteobacteria</taxon>
        <taxon>Pasteurellales</taxon>
        <taxon>Pasteurellaceae</taxon>
        <taxon>Haemophilus</taxon>
    </lineage>
</organism>
<comment type="function">
    <text evidence="1">Component of the acetyl coenzyme A carboxylase (ACC) complex. Biotin carboxylase (BC) catalyzes the carboxylation of biotin on its carrier protein (BCCP) and then the CO(2) group is transferred by the transcarboxylase to acetyl-CoA to form malonyl-CoA.</text>
</comment>
<comment type="catalytic activity">
    <reaction evidence="1">
        <text>N(6)-carboxybiotinyl-L-lysyl-[protein] + acetyl-CoA = N(6)-biotinyl-L-lysyl-[protein] + malonyl-CoA</text>
        <dbReference type="Rhea" id="RHEA:54728"/>
        <dbReference type="Rhea" id="RHEA-COMP:10505"/>
        <dbReference type="Rhea" id="RHEA-COMP:10506"/>
        <dbReference type="ChEBI" id="CHEBI:57288"/>
        <dbReference type="ChEBI" id="CHEBI:57384"/>
        <dbReference type="ChEBI" id="CHEBI:83144"/>
        <dbReference type="ChEBI" id="CHEBI:83145"/>
        <dbReference type="EC" id="2.1.3.15"/>
    </reaction>
</comment>
<comment type="cofactor">
    <cofactor evidence="1">
        <name>Zn(2+)</name>
        <dbReference type="ChEBI" id="CHEBI:29105"/>
    </cofactor>
    <text evidence="1">Binds 1 zinc ion per subunit.</text>
</comment>
<comment type="pathway">
    <text evidence="1">Lipid metabolism; malonyl-CoA biosynthesis; malonyl-CoA from acetyl-CoA: step 1/1.</text>
</comment>
<comment type="subunit">
    <text evidence="1">Acetyl-CoA carboxylase is a heterohexamer composed of biotin carboxyl carrier protein (AccB), biotin carboxylase (AccC) and two subunits each of ACCase subunit alpha (AccA) and ACCase subunit beta (AccD).</text>
</comment>
<comment type="subcellular location">
    <subcellularLocation>
        <location evidence="1">Cytoplasm</location>
    </subcellularLocation>
</comment>
<comment type="similarity">
    <text evidence="1">Belongs to the AccD/PCCB family.</text>
</comment>
<gene>
    <name evidence="1" type="primary">accD</name>
    <name type="ordered locus">HD_1466</name>
</gene>
<proteinExistence type="inferred from homology"/>
<keyword id="KW-0067">ATP-binding</keyword>
<keyword id="KW-0963">Cytoplasm</keyword>
<keyword id="KW-0275">Fatty acid biosynthesis</keyword>
<keyword id="KW-0276">Fatty acid metabolism</keyword>
<keyword id="KW-0444">Lipid biosynthesis</keyword>
<keyword id="KW-0443">Lipid metabolism</keyword>
<keyword id="KW-0479">Metal-binding</keyword>
<keyword id="KW-0547">Nucleotide-binding</keyword>
<keyword id="KW-1185">Reference proteome</keyword>
<keyword id="KW-0808">Transferase</keyword>
<keyword id="KW-0862">Zinc</keyword>
<keyword id="KW-0863">Zinc-finger</keyword>
<sequence length="296" mass="32703">MSWIERILGRTASSSSSSKSKVPEGVWTKCTNCEQVLYSEELKRNMQVCPKCDHHMRFDARTRLLSLLDQGSAEEIAANLEPQDILKFKDLKKYKDRLTAAQKQTGEKDAFITMFGTLYEMPIVVASFNFEFMGGSMGAVVGAKFVRAAEKALAENIPFICFSASGGARMQEALFSLMQMAKTSAILAKMREKGGPFISVLTDPTLGGVSASLAMLGDINIAEPKSLIGFAGPRVIEQTVREKLPEGFQRAEFLLEHGAIDMIVQRKDMRDTLARLCAKMTNQPSPFKVGELIIEE</sequence>
<name>ACCD_HAEDU</name>
<protein>
    <recommendedName>
        <fullName evidence="1">Acetyl-coenzyme A carboxylase carboxyl transferase subunit beta</fullName>
        <shortName evidence="1">ACCase subunit beta</shortName>
        <shortName evidence="1">Acetyl-CoA carboxylase carboxyltransferase subunit beta</shortName>
        <ecNumber evidence="1">2.1.3.15</ecNumber>
    </recommendedName>
</protein>
<feature type="chain" id="PRO_0000358996" description="Acetyl-coenzyme A carboxylase carboxyl transferase subunit beta">
    <location>
        <begin position="1"/>
        <end position="296"/>
    </location>
</feature>
<feature type="domain" description="CoA carboxyltransferase N-terminal" evidence="2">
    <location>
        <begin position="26"/>
        <end position="295"/>
    </location>
</feature>
<feature type="zinc finger region" description="C4-type" evidence="1">
    <location>
        <begin position="30"/>
        <end position="52"/>
    </location>
</feature>
<feature type="binding site" evidence="1">
    <location>
        <position position="30"/>
    </location>
    <ligand>
        <name>Zn(2+)</name>
        <dbReference type="ChEBI" id="CHEBI:29105"/>
    </ligand>
</feature>
<feature type="binding site" evidence="1">
    <location>
        <position position="33"/>
    </location>
    <ligand>
        <name>Zn(2+)</name>
        <dbReference type="ChEBI" id="CHEBI:29105"/>
    </ligand>
</feature>
<feature type="binding site" evidence="1">
    <location>
        <position position="49"/>
    </location>
    <ligand>
        <name>Zn(2+)</name>
        <dbReference type="ChEBI" id="CHEBI:29105"/>
    </ligand>
</feature>
<feature type="binding site" evidence="1">
    <location>
        <position position="52"/>
    </location>
    <ligand>
        <name>Zn(2+)</name>
        <dbReference type="ChEBI" id="CHEBI:29105"/>
    </ligand>
</feature>